<protein>
    <recommendedName>
        <fullName>Capsid polyprotein VP90</fullName>
    </recommendedName>
    <component>
        <recommendedName>
            <fullName>Capsid polyprotein VP70</fullName>
        </recommendedName>
    </component>
    <component>
        <recommendedName>
            <fullName>Core protein VP34</fullName>
        </recommendedName>
    </component>
    <component>
        <recommendedName>
            <fullName>Spike protein VP27</fullName>
        </recommendedName>
    </component>
    <component>
        <recommendedName>
            <fullName>spike protein VP25</fullName>
        </recommendedName>
    </component>
</protein>
<keyword id="KW-0167">Capsid protein</keyword>
<keyword id="KW-1165">Clathrin-mediated endocytosis of virus by host</keyword>
<keyword id="KW-1142">T=3 icosahedral capsid protein</keyword>
<keyword id="KW-1162">Viral penetration into host cytoplasm</keyword>
<keyword id="KW-0946">Virion</keyword>
<keyword id="KW-1164">Virus endocytosis by host</keyword>
<keyword id="KW-1160">Virus entry into host cell</keyword>
<feature type="chain" id="PRO_0000320233" description="Capsid polyprotein VP90">
    <location>
        <begin position="1"/>
        <end position="794"/>
    </location>
</feature>
<feature type="chain" id="PRO_0000419562" description="Capsid polyprotein VP70" evidence="4">
    <location>
        <begin position="1"/>
        <end position="658"/>
    </location>
</feature>
<feature type="chain" id="PRO_0000419563" description="Core protein VP34" evidence="4">
    <location>
        <begin position="1"/>
        <end position="315"/>
    </location>
</feature>
<feature type="chain" id="PRO_0000419564" description="Spike protein VP27" evidence="4">
    <location>
        <begin position="396"/>
        <end position="649"/>
    </location>
</feature>
<feature type="chain" id="PRO_0000419565" description="spike protein VP25" evidence="4">
    <location>
        <begin position="426"/>
        <end position="649"/>
    </location>
</feature>
<feature type="region of interest" description="Basic" evidence="3">
    <location>
        <begin position="1"/>
        <end position="72"/>
    </location>
</feature>
<feature type="region of interest" description="Disordered" evidence="5">
    <location>
        <begin position="1"/>
        <end position="59"/>
    </location>
</feature>
<feature type="region of interest" description="Inner core" evidence="3">
    <location>
        <begin position="73"/>
        <end position="265"/>
    </location>
</feature>
<feature type="region of interest" description="Core attachment" evidence="3">
    <location>
        <begin position="396"/>
        <end position="425"/>
    </location>
</feature>
<feature type="region of interest" description="P2 globular domain" evidence="3">
    <location>
        <begin position="426"/>
        <end position="649"/>
    </location>
</feature>
<feature type="region of interest" description="Acidic" evidence="3">
    <location>
        <begin position="650"/>
        <end position="794"/>
    </location>
</feature>
<feature type="region of interest" description="Disordered" evidence="5">
    <location>
        <begin position="681"/>
        <end position="715"/>
    </location>
</feature>
<feature type="compositionally biased region" description="Basic residues" evidence="5">
    <location>
        <begin position="21"/>
        <end position="37"/>
    </location>
</feature>
<feature type="compositionally biased region" description="Acidic residues" evidence="5">
    <location>
        <begin position="681"/>
        <end position="697"/>
    </location>
</feature>
<feature type="site" description="Cleavage" evidence="3">
    <location>
        <begin position="315"/>
        <end position="316"/>
    </location>
</feature>
<feature type="site" description="Cleavage" evidence="3">
    <location>
        <begin position="395"/>
        <end position="396"/>
    </location>
</feature>
<feature type="site" description="Cleavage" evidence="3">
    <location>
        <begin position="425"/>
        <end position="426"/>
    </location>
</feature>
<feature type="site" description="Cleavage" evidence="3">
    <location>
        <begin position="649"/>
        <end position="650"/>
    </location>
</feature>
<feature type="site" description="Cleavage" evidence="4">
    <location>
        <begin position="658"/>
        <end position="659"/>
    </location>
</feature>
<comment type="function">
    <molecule>Capsid polyprotein VP90</molecule>
    <text evidence="3">The capsid polyprotein VP90 self-assembles and undergoes a proteolytic cleavage by host caspases to yield the immature VP70 virion.</text>
</comment>
<comment type="function">
    <molecule>Capsid polyprotein VP70</molecule>
    <text evidence="3">The immature virion is composed of 180 VP70 subunits with 90 dimeric spikes and displays a T=3 icosahedral symmetry (By similarity). During maturation, VP70 undergoes a loss of 60 peripentonal spikes, which likely plays an important role in viral infectivity (By similarity).</text>
</comment>
<comment type="function">
    <molecule>Core protein VP34</molecule>
    <text evidence="1">Self-assembles to form an icosahedral capsid with a T=3 symmetry, about 43 nm in diameter (By similarity). This forms contains only 30 spikes located on the icosahedral 2-fold axes (By similarity).</text>
</comment>
<comment type="function">
    <molecule>Spike protein VP27</molecule>
    <text evidence="1 3">VP25 and VP27 Forms the spikes at the surface of the virion (By similarity). This forms contains only 30 spikes located on the icosahedral 2-fold axes (By similarity). Plays a role in the attachment to target host cell (By similarity). This attachment induces virion internalization through clathrin-dependent endocytosis (By similarity).</text>
</comment>
<comment type="function">
    <molecule>spike protein VP25</molecule>
    <text evidence="1 2 3">VP25 and VP27 Forms the spikes at the surface of the virion (By similarity). This forms contains only 30 spikes located on the icosahedral 2-fold axes (By similarity). Plays a role in the attachment to target host cell (By similarity). This attachment induces virion internalization through clathrin-dependent endocytosis (By similarity).</text>
</comment>
<comment type="subunit">
    <molecule>spike protein VP25</molecule>
    <text evidence="3">Heterodimer with spike protein VP27 (By similarity). The spikes form a globular dimer with 30 spikes covering the mature virion (By similarity). Spike protein VP25 that lacks the core attachment region may need to dimerize with spike protein VP27 to remain stably bound to the viral particle (By similarity).</text>
</comment>
<comment type="subunit">
    <molecule>Spike protein VP27</molecule>
    <text evidence="3">Heterodimer with spike protein VP25 (By similarity). The spikes form a globular dimer with 30 spikes covering the mature virion (By similarity). Spike protein VP25 that lacks the core attachment region may need to dimerize with spike protein VP27 to remain stably bound to the viral particle (By similarity).</text>
</comment>
<comment type="subcellular location">
    <molecule>Capsid polyprotein VP90</molecule>
    <subcellularLocation>
        <location evidence="3">Virion</location>
    </subcellularLocation>
    <text evidence="3">Immature capsid.</text>
</comment>
<comment type="subcellular location">
    <molecule>Capsid polyprotein VP70</molecule>
    <subcellularLocation>
        <location evidence="3">Virion</location>
    </subcellularLocation>
    <text evidence="3">Immature capsid after cleavage by host caspases.</text>
</comment>
<comment type="subcellular location">
    <molecule>Core protein VP34</molecule>
    <subcellularLocation>
        <location evidence="1">Virion</location>
    </subcellularLocation>
    <text evidence="1">Capsid.</text>
</comment>
<comment type="subcellular location">
    <molecule>Spike protein VP27</molecule>
    <subcellularLocation>
        <location evidence="1">Virion</location>
    </subcellularLocation>
    <text evidence="1">Capsid.</text>
</comment>
<comment type="subcellular location">
    <molecule>spike protein VP25</molecule>
    <subcellularLocation>
        <location evidence="1">Host extracellular space</location>
    </subcellularLocation>
    <subcellularLocation>
        <location>Virion</location>
    </subcellularLocation>
    <text evidence="1 6">Capsid (By similarity). Spike protein VP25 that lacks the core attachment region may need to dimerize with spike protein VP27 to remain stably bound to the viral particle (Probable).</text>
</comment>
<comment type="domain">
    <molecule>Spike protein VP27</molecule>
    <text evidence="3">Contains the core attachment region and the P2 globular region.</text>
</comment>
<comment type="domain">
    <molecule>spike protein VP25</molecule>
    <text evidence="3">Contains the P2 globular region (By similarity). The core attachment region is lost by cleavage (By similarity).</text>
</comment>
<comment type="PTM">
    <molecule>Capsid polyprotein VP90</molecule>
    <text evidence="3">Specific enzymatic cleavages by the host yield mature proteins. VP90 acidic C-terminal domain is eliminated from the immature virion by host caspases during viral maturation giving rise to virions composed of VP70 (By similarity). The virus can then dissociate from cellular membranes and exit the cell (By similarity). Further cleavages by host extracellular proteases occur resulting in the three structural proteins VP34, VP27 and VP25 and conferring infectivity (By similarity).</text>
</comment>
<comment type="similarity">
    <text evidence="6">Belongs to the astroviridae capsid polyprotein family.</text>
</comment>
<organismHost>
    <name type="scientific">Homo sapiens</name>
    <name type="common">Human</name>
    <dbReference type="NCBI Taxonomy" id="9606"/>
</organismHost>
<organism>
    <name type="scientific">Human astrovirus-3</name>
    <name type="common">HAstV-3</name>
    <dbReference type="NCBI Taxonomy" id="35740"/>
    <lineage>
        <taxon>Viruses</taxon>
        <taxon>Riboviria</taxon>
        <taxon>Orthornavirae</taxon>
        <taxon>Pisuviricota</taxon>
        <taxon>Stelpaviricetes</taxon>
        <taxon>Stellavirales</taxon>
        <taxon>Astroviridae</taxon>
        <taxon>Mamastrovirus</taxon>
        <taxon>Mamastrovirus 1</taxon>
    </lineage>
</organism>
<sequence length="794" mass="87096">MASKSDKQVTVEVKNNNNGRNRSRSRARSQSRGRGKSVKITVNSRSRGRRQNGRDKYQSNQRVRNIVTKQLRKQGVTGPKPAICQRATATLGTIGSNTSGTTEIEACILLNPVLVKDATGSTQFGPVQALGAQYSMWKLKYLNVKLTSMVGASAVNGTVVRVSLNPTSTPSSTSWSGLGARKHLDVTVGKNAVFKLKPADLGGPRDGWWLTNTNDNASDTLGPSVEIHTLGMTMSSYKNEQFTGGLFLVELASEWCFTGYAANPNLVNLEKSTDKQVNVTFEGSNGTPLIMKVPEASHFARTAVARSSLPTTLARAGQNTTSDTVWQVLNTAVSAAELVTPPPFNWLVKGGWWFVKLIAGRARTGTRSFYVYPSYQDALSNKPALCTGSAPSGMRSRAAVMTTLQFTQMNQPSLGHGEMTATLGRAIPSPGDTFNVVLTIGQPLAPNTLTKQSWLNKTTVSPQNHHVVKIAKDVNNYTTMQGFTPISSVDWYTTDFQPSEEPTPIPGLQVLVNSSKKADVYAIQQYLNNQTNNKVQLTSIFLVKVTTSFQVNNYLSYFYRSYGTGTTVENLKVRSDTTAQDVNFPVGWYLMTNTAIFNAPAPPGWIWQNVELLNDTAYLIDQGMMHLIMPPPANTQLLFEMRTSVTGSRSMISSEEPDTHEPGDEWCDALDASDSRVFLEETDYEDEEDEDEDDEADRFDLHSSYGSEPEDDDENNRVTLLSTLINQGMTVERATRITKRAFPTSADKTKRSVYMDLLASGLSPGNAWSHACEEARIMGTNQMPNVSGDRGHAE</sequence>
<dbReference type="EMBL" id="AF117209">
    <property type="protein sequence ID" value="AAD17224.1"/>
    <property type="molecule type" value="Genomic_RNA"/>
</dbReference>
<dbReference type="SMR" id="Q9WFZ0"/>
<dbReference type="GO" id="GO:0043655">
    <property type="term" value="C:host extracellular space"/>
    <property type="evidence" value="ECO:0007669"/>
    <property type="project" value="UniProtKB-SubCell"/>
</dbReference>
<dbReference type="GO" id="GO:0039617">
    <property type="term" value="C:T=3 icosahedral viral capsid"/>
    <property type="evidence" value="ECO:0000250"/>
    <property type="project" value="UniProtKB"/>
</dbReference>
<dbReference type="GO" id="GO:0075512">
    <property type="term" value="P:clathrin-dependent endocytosis of virus by host cell"/>
    <property type="evidence" value="ECO:0000250"/>
    <property type="project" value="UniProtKB"/>
</dbReference>
<dbReference type="FunFam" id="2.60.120.20:FF:000007">
    <property type="entry name" value="Capsid polyprotein VP90"/>
    <property type="match status" value="1"/>
</dbReference>
<dbReference type="Gene3D" id="2.60.120.20">
    <property type="match status" value="1"/>
</dbReference>
<dbReference type="InterPro" id="IPR004337">
    <property type="entry name" value="Astro_capsid_N"/>
</dbReference>
<dbReference type="InterPro" id="IPR022027">
    <property type="entry name" value="Astro_capsid_p"/>
</dbReference>
<dbReference type="InterPro" id="IPR029053">
    <property type="entry name" value="Viral_coat"/>
</dbReference>
<dbReference type="Pfam" id="PF03115">
    <property type="entry name" value="Astro_capsid_N"/>
    <property type="match status" value="1"/>
</dbReference>
<dbReference type="Pfam" id="PF12226">
    <property type="entry name" value="Astro_capsid_p"/>
    <property type="match status" value="1"/>
</dbReference>
<evidence type="ECO:0000250" key="1">
    <source>
        <dbReference type="UniProtKB" id="O12792"/>
    </source>
</evidence>
<evidence type="ECO:0000250" key="2">
    <source>
        <dbReference type="UniProtKB" id="Q82446"/>
    </source>
</evidence>
<evidence type="ECO:0000250" key="3">
    <source>
        <dbReference type="UniProtKB" id="Q9IFX1"/>
    </source>
</evidence>
<evidence type="ECO:0000255" key="4"/>
<evidence type="ECO:0000256" key="5">
    <source>
        <dbReference type="SAM" id="MobiDB-lite"/>
    </source>
</evidence>
<evidence type="ECO:0000305" key="6"/>
<reference key="1">
    <citation type="submission" date="1998-12" db="EMBL/GenBank/DDBJ databases">
        <authorList>
            <person name="Monroe S.S."/>
            <person name="Stine S.E."/>
        </authorList>
    </citation>
    <scope>NUCLEOTIDE SEQUENCE [GENOMIC RNA]</scope>
</reference>
<name>CAPSD_HASV3</name>
<gene>
    <name type="ORF">ORF2</name>
</gene>
<accession>Q9WFZ0</accession>
<proteinExistence type="inferred from homology"/>